<feature type="chain" id="PRO_0000300216" description="Cell division activator CedA">
    <location>
        <begin position="1"/>
        <end position="80"/>
    </location>
</feature>
<name>CEDA_SALTY</name>
<sequence length="80" mass="9471">MMKPLRQQNRQIISYIPRVEPAPPEHAIKMDTFRDVWILRGKYVAFVLTRESFQRSPAFSVPESAQRWANQVRQENEIAD</sequence>
<comment type="function">
    <text evidence="1">Activates the cell division inhibited by chromosomal DNA over-replication.</text>
</comment>
<comment type="similarity">
    <text evidence="1">Belongs to the CedA family.</text>
</comment>
<dbReference type="EMBL" id="AE006468">
    <property type="protein sequence ID" value="AAL20244.1"/>
    <property type="molecule type" value="Genomic_DNA"/>
</dbReference>
<dbReference type="RefSeq" id="NP_460285.1">
    <property type="nucleotide sequence ID" value="NC_003197.2"/>
</dbReference>
<dbReference type="RefSeq" id="WP_000977512.1">
    <property type="nucleotide sequence ID" value="NC_003197.2"/>
</dbReference>
<dbReference type="SMR" id="Q8ZPU0"/>
<dbReference type="STRING" id="99287.STM1319"/>
<dbReference type="PaxDb" id="99287-STM1319"/>
<dbReference type="GeneID" id="1252837"/>
<dbReference type="KEGG" id="stm:STM1319"/>
<dbReference type="PATRIC" id="fig|99287.12.peg.1402"/>
<dbReference type="HOGENOM" id="CLU_167445_0_0_6"/>
<dbReference type="PhylomeDB" id="Q8ZPU0"/>
<dbReference type="BioCyc" id="SENT99287:STM1319-MONOMER"/>
<dbReference type="Proteomes" id="UP000001014">
    <property type="component" value="Chromosome"/>
</dbReference>
<dbReference type="GO" id="GO:0003677">
    <property type="term" value="F:DNA binding"/>
    <property type="evidence" value="ECO:0007669"/>
    <property type="project" value="UniProtKB-UniRule"/>
</dbReference>
<dbReference type="GO" id="GO:0051301">
    <property type="term" value="P:cell division"/>
    <property type="evidence" value="ECO:0007669"/>
    <property type="project" value="UniProtKB-UniRule"/>
</dbReference>
<dbReference type="Gene3D" id="3.30.730.20">
    <property type="entry name" value="Cell division activator CedA"/>
    <property type="match status" value="1"/>
</dbReference>
<dbReference type="HAMAP" id="MF_01580">
    <property type="entry name" value="CedA"/>
    <property type="match status" value="1"/>
</dbReference>
<dbReference type="InterPro" id="IPR038463">
    <property type="entry name" value="CedA-like_sf"/>
</dbReference>
<dbReference type="InterPro" id="IPR019666">
    <property type="entry name" value="Cell_div_activator_CedA"/>
</dbReference>
<dbReference type="NCBIfam" id="NF007510">
    <property type="entry name" value="PRK10113.1"/>
    <property type="match status" value="1"/>
</dbReference>
<dbReference type="Pfam" id="PF10729">
    <property type="entry name" value="CedA"/>
    <property type="match status" value="1"/>
</dbReference>
<gene>
    <name evidence="1" type="primary">cedA</name>
    <name type="ordered locus">STM1319</name>
</gene>
<organism>
    <name type="scientific">Salmonella typhimurium (strain LT2 / SGSC1412 / ATCC 700720)</name>
    <dbReference type="NCBI Taxonomy" id="99287"/>
    <lineage>
        <taxon>Bacteria</taxon>
        <taxon>Pseudomonadati</taxon>
        <taxon>Pseudomonadota</taxon>
        <taxon>Gammaproteobacteria</taxon>
        <taxon>Enterobacterales</taxon>
        <taxon>Enterobacteriaceae</taxon>
        <taxon>Salmonella</taxon>
    </lineage>
</organism>
<proteinExistence type="inferred from homology"/>
<accession>Q8ZPU0</accession>
<protein>
    <recommendedName>
        <fullName evidence="1">Cell division activator CedA</fullName>
    </recommendedName>
</protein>
<keyword id="KW-0131">Cell cycle</keyword>
<keyword id="KW-0132">Cell division</keyword>
<keyword id="KW-0238">DNA-binding</keyword>
<keyword id="KW-1185">Reference proteome</keyword>
<evidence type="ECO:0000255" key="1">
    <source>
        <dbReference type="HAMAP-Rule" id="MF_01580"/>
    </source>
</evidence>
<reference key="1">
    <citation type="journal article" date="2001" name="Nature">
        <title>Complete genome sequence of Salmonella enterica serovar Typhimurium LT2.</title>
        <authorList>
            <person name="McClelland M."/>
            <person name="Sanderson K.E."/>
            <person name="Spieth J."/>
            <person name="Clifton S.W."/>
            <person name="Latreille P."/>
            <person name="Courtney L."/>
            <person name="Porwollik S."/>
            <person name="Ali J."/>
            <person name="Dante M."/>
            <person name="Du F."/>
            <person name="Hou S."/>
            <person name="Layman D."/>
            <person name="Leonard S."/>
            <person name="Nguyen C."/>
            <person name="Scott K."/>
            <person name="Holmes A."/>
            <person name="Grewal N."/>
            <person name="Mulvaney E."/>
            <person name="Ryan E."/>
            <person name="Sun H."/>
            <person name="Florea L."/>
            <person name="Miller W."/>
            <person name="Stoneking T."/>
            <person name="Nhan M."/>
            <person name="Waterston R."/>
            <person name="Wilson R.K."/>
        </authorList>
    </citation>
    <scope>NUCLEOTIDE SEQUENCE [LARGE SCALE GENOMIC DNA]</scope>
    <source>
        <strain>LT2 / SGSC1412 / ATCC 700720</strain>
    </source>
</reference>